<evidence type="ECO:0000255" key="1">
    <source>
        <dbReference type="HAMAP-Rule" id="MF_00059"/>
    </source>
</evidence>
<protein>
    <recommendedName>
        <fullName evidence="1">DNA-directed RNA polymerase subunit alpha</fullName>
        <shortName evidence="1">RNAP subunit alpha</shortName>
        <ecNumber evidence="1">2.7.7.6</ecNumber>
    </recommendedName>
    <alternativeName>
        <fullName evidence="1">RNA polymerase subunit alpha</fullName>
    </alternativeName>
    <alternativeName>
        <fullName evidence="1">Transcriptase subunit alpha</fullName>
    </alternativeName>
</protein>
<gene>
    <name evidence="1" type="primary">rpoA</name>
    <name type="ordered locus">CLM_3919</name>
</gene>
<comment type="function">
    <text evidence="1">DNA-dependent RNA polymerase catalyzes the transcription of DNA into RNA using the four ribonucleoside triphosphates as substrates.</text>
</comment>
<comment type="catalytic activity">
    <reaction evidence="1">
        <text>RNA(n) + a ribonucleoside 5'-triphosphate = RNA(n+1) + diphosphate</text>
        <dbReference type="Rhea" id="RHEA:21248"/>
        <dbReference type="Rhea" id="RHEA-COMP:14527"/>
        <dbReference type="Rhea" id="RHEA-COMP:17342"/>
        <dbReference type="ChEBI" id="CHEBI:33019"/>
        <dbReference type="ChEBI" id="CHEBI:61557"/>
        <dbReference type="ChEBI" id="CHEBI:140395"/>
        <dbReference type="EC" id="2.7.7.6"/>
    </reaction>
</comment>
<comment type="subunit">
    <text evidence="1">Homodimer. The RNAP catalytic core consists of 2 alpha, 1 beta, 1 beta' and 1 omega subunit. When a sigma factor is associated with the core the holoenzyme is formed, which can initiate transcription.</text>
</comment>
<comment type="domain">
    <text evidence="1">The N-terminal domain is essential for RNAP assembly and basal transcription, whereas the C-terminal domain is involved in interaction with transcriptional regulators and with upstream promoter elements.</text>
</comment>
<comment type="similarity">
    <text evidence="1">Belongs to the RNA polymerase alpha chain family.</text>
</comment>
<organism>
    <name type="scientific">Clostridium botulinum (strain Kyoto / Type A2)</name>
    <dbReference type="NCBI Taxonomy" id="536232"/>
    <lineage>
        <taxon>Bacteria</taxon>
        <taxon>Bacillati</taxon>
        <taxon>Bacillota</taxon>
        <taxon>Clostridia</taxon>
        <taxon>Eubacteriales</taxon>
        <taxon>Clostridiaceae</taxon>
        <taxon>Clostridium</taxon>
    </lineage>
</organism>
<sequence length="315" mass="35397">MLEIEKPKIECVENAEDGSYGKFVIEPLERGYGITLGNALRRILLSSLPGVAADHIKIDSVLHEFSTVQGVKEDVTELILNIKCLALTMNGEGPKTIYIDEVGPKEVTAADIKTDGDVEVINKDLHIATLDENGKMYMEINVNRGRGYVTQNKNKTKDMPIGSIAVDSIYTPVKRVNFSVENTRVGQITDYDKLTIEVWTNGTIRPEEAVSLSAKILIEHFKLFMTLTDHADDMEIMVEKEEDKKEKVLEMTIEELDLSVRSYNCLKRAGINTVQELCERSMDDMMKVRNLGKKSLEEVEQKLEALGLGLRKSED</sequence>
<keyword id="KW-0240">DNA-directed RNA polymerase</keyword>
<keyword id="KW-0548">Nucleotidyltransferase</keyword>
<keyword id="KW-0804">Transcription</keyword>
<keyword id="KW-0808">Transferase</keyword>
<proteinExistence type="inferred from homology"/>
<feature type="chain" id="PRO_1000196630" description="DNA-directed RNA polymerase subunit alpha">
    <location>
        <begin position="1"/>
        <end position="315"/>
    </location>
</feature>
<feature type="region of interest" description="Alpha N-terminal domain (alpha-NTD)" evidence="1">
    <location>
        <begin position="1"/>
        <end position="228"/>
    </location>
</feature>
<feature type="region of interest" description="Alpha C-terminal domain (alpha-CTD)" evidence="1">
    <location>
        <begin position="245"/>
        <end position="315"/>
    </location>
</feature>
<reference key="1">
    <citation type="submission" date="2008-10" db="EMBL/GenBank/DDBJ databases">
        <title>Genome sequence of Clostridium botulinum A2 Kyoto.</title>
        <authorList>
            <person name="Shrivastava S."/>
            <person name="Brinkac L.M."/>
            <person name="Brown J.L."/>
            <person name="Bruce D."/>
            <person name="Detter C.C."/>
            <person name="Johnson E.A."/>
            <person name="Munk C.A."/>
            <person name="Smith L.A."/>
            <person name="Smith T.J."/>
            <person name="Sutton G."/>
            <person name="Brettin T.S."/>
        </authorList>
    </citation>
    <scope>NUCLEOTIDE SEQUENCE [LARGE SCALE GENOMIC DNA]</scope>
    <source>
        <strain>Kyoto / Type A2</strain>
    </source>
</reference>
<accession>C1FMS2</accession>
<dbReference type="EC" id="2.7.7.6" evidence="1"/>
<dbReference type="EMBL" id="CP001581">
    <property type="protein sequence ID" value="ACO85516.1"/>
    <property type="molecule type" value="Genomic_DNA"/>
</dbReference>
<dbReference type="RefSeq" id="WP_003357472.1">
    <property type="nucleotide sequence ID" value="NC_012563.1"/>
</dbReference>
<dbReference type="SMR" id="C1FMS2"/>
<dbReference type="KEGG" id="cby:CLM_3919"/>
<dbReference type="eggNOG" id="COG0202">
    <property type="taxonomic scope" value="Bacteria"/>
</dbReference>
<dbReference type="HOGENOM" id="CLU_053084_0_1_9"/>
<dbReference type="Proteomes" id="UP000001374">
    <property type="component" value="Chromosome"/>
</dbReference>
<dbReference type="GO" id="GO:0005737">
    <property type="term" value="C:cytoplasm"/>
    <property type="evidence" value="ECO:0007669"/>
    <property type="project" value="UniProtKB-ARBA"/>
</dbReference>
<dbReference type="GO" id="GO:0000428">
    <property type="term" value="C:DNA-directed RNA polymerase complex"/>
    <property type="evidence" value="ECO:0007669"/>
    <property type="project" value="UniProtKB-KW"/>
</dbReference>
<dbReference type="GO" id="GO:0003677">
    <property type="term" value="F:DNA binding"/>
    <property type="evidence" value="ECO:0007669"/>
    <property type="project" value="UniProtKB-UniRule"/>
</dbReference>
<dbReference type="GO" id="GO:0003899">
    <property type="term" value="F:DNA-directed RNA polymerase activity"/>
    <property type="evidence" value="ECO:0007669"/>
    <property type="project" value="UniProtKB-UniRule"/>
</dbReference>
<dbReference type="GO" id="GO:0046983">
    <property type="term" value="F:protein dimerization activity"/>
    <property type="evidence" value="ECO:0007669"/>
    <property type="project" value="InterPro"/>
</dbReference>
<dbReference type="GO" id="GO:0006351">
    <property type="term" value="P:DNA-templated transcription"/>
    <property type="evidence" value="ECO:0007669"/>
    <property type="project" value="UniProtKB-UniRule"/>
</dbReference>
<dbReference type="CDD" id="cd06928">
    <property type="entry name" value="RNAP_alpha_NTD"/>
    <property type="match status" value="1"/>
</dbReference>
<dbReference type="FunFam" id="1.10.150.20:FF:000001">
    <property type="entry name" value="DNA-directed RNA polymerase subunit alpha"/>
    <property type="match status" value="1"/>
</dbReference>
<dbReference type="FunFam" id="2.170.120.12:FF:000001">
    <property type="entry name" value="DNA-directed RNA polymerase subunit alpha"/>
    <property type="match status" value="1"/>
</dbReference>
<dbReference type="Gene3D" id="1.10.150.20">
    <property type="entry name" value="5' to 3' exonuclease, C-terminal subdomain"/>
    <property type="match status" value="1"/>
</dbReference>
<dbReference type="Gene3D" id="2.170.120.12">
    <property type="entry name" value="DNA-directed RNA polymerase, insert domain"/>
    <property type="match status" value="1"/>
</dbReference>
<dbReference type="Gene3D" id="3.30.1360.10">
    <property type="entry name" value="RNA polymerase, RBP11-like subunit"/>
    <property type="match status" value="1"/>
</dbReference>
<dbReference type="HAMAP" id="MF_00059">
    <property type="entry name" value="RNApol_bact_RpoA"/>
    <property type="match status" value="1"/>
</dbReference>
<dbReference type="InterPro" id="IPR011262">
    <property type="entry name" value="DNA-dir_RNA_pol_insert"/>
</dbReference>
<dbReference type="InterPro" id="IPR011263">
    <property type="entry name" value="DNA-dir_RNA_pol_RpoA/D/Rpb3"/>
</dbReference>
<dbReference type="InterPro" id="IPR011773">
    <property type="entry name" value="DNA-dir_RpoA"/>
</dbReference>
<dbReference type="InterPro" id="IPR036603">
    <property type="entry name" value="RBP11-like"/>
</dbReference>
<dbReference type="InterPro" id="IPR011260">
    <property type="entry name" value="RNAP_asu_C"/>
</dbReference>
<dbReference type="InterPro" id="IPR036643">
    <property type="entry name" value="RNApol_insert_sf"/>
</dbReference>
<dbReference type="NCBIfam" id="NF003513">
    <property type="entry name" value="PRK05182.1-2"/>
    <property type="match status" value="1"/>
</dbReference>
<dbReference type="NCBIfam" id="NF003515">
    <property type="entry name" value="PRK05182.2-1"/>
    <property type="match status" value="1"/>
</dbReference>
<dbReference type="NCBIfam" id="NF003516">
    <property type="entry name" value="PRK05182.2-2"/>
    <property type="match status" value="1"/>
</dbReference>
<dbReference type="NCBIfam" id="NF003519">
    <property type="entry name" value="PRK05182.2-5"/>
    <property type="match status" value="1"/>
</dbReference>
<dbReference type="NCBIfam" id="TIGR02027">
    <property type="entry name" value="rpoA"/>
    <property type="match status" value="1"/>
</dbReference>
<dbReference type="Pfam" id="PF01000">
    <property type="entry name" value="RNA_pol_A_bac"/>
    <property type="match status" value="1"/>
</dbReference>
<dbReference type="Pfam" id="PF03118">
    <property type="entry name" value="RNA_pol_A_CTD"/>
    <property type="match status" value="1"/>
</dbReference>
<dbReference type="Pfam" id="PF01193">
    <property type="entry name" value="RNA_pol_L"/>
    <property type="match status" value="1"/>
</dbReference>
<dbReference type="SMART" id="SM00662">
    <property type="entry name" value="RPOLD"/>
    <property type="match status" value="1"/>
</dbReference>
<dbReference type="SUPFAM" id="SSF47789">
    <property type="entry name" value="C-terminal domain of RNA polymerase alpha subunit"/>
    <property type="match status" value="1"/>
</dbReference>
<dbReference type="SUPFAM" id="SSF56553">
    <property type="entry name" value="Insert subdomain of RNA polymerase alpha subunit"/>
    <property type="match status" value="1"/>
</dbReference>
<dbReference type="SUPFAM" id="SSF55257">
    <property type="entry name" value="RBP11-like subunits of RNA polymerase"/>
    <property type="match status" value="1"/>
</dbReference>
<name>RPOA_CLOBJ</name>